<keyword id="KW-0067">ATP-binding</keyword>
<keyword id="KW-0119">Carbohydrate metabolism</keyword>
<keyword id="KW-0320">Glycogen biosynthesis</keyword>
<keyword id="KW-0321">Glycogen metabolism</keyword>
<keyword id="KW-0547">Nucleotide-binding</keyword>
<keyword id="KW-0548">Nucleotidyltransferase</keyword>
<keyword id="KW-0808">Transferase</keyword>
<gene>
    <name evidence="1" type="primary">glgC</name>
    <name type="ordered locus">SPN23F10420</name>
</gene>
<accession>B8ZPW3</accession>
<name>GLGC_STRPJ</name>
<dbReference type="EC" id="2.7.7.27" evidence="1"/>
<dbReference type="EMBL" id="FM211187">
    <property type="protein sequence ID" value="CAR68861.1"/>
    <property type="molecule type" value="Genomic_DNA"/>
</dbReference>
<dbReference type="RefSeq" id="WP_000787276.1">
    <property type="nucleotide sequence ID" value="NC_011900.1"/>
</dbReference>
<dbReference type="SMR" id="B8ZPW3"/>
<dbReference type="KEGG" id="sne:SPN23F10420"/>
<dbReference type="HOGENOM" id="CLU_029499_14_0_9"/>
<dbReference type="UniPathway" id="UPA00164"/>
<dbReference type="GO" id="GO:0005524">
    <property type="term" value="F:ATP binding"/>
    <property type="evidence" value="ECO:0007669"/>
    <property type="project" value="UniProtKB-KW"/>
</dbReference>
<dbReference type="GO" id="GO:0008878">
    <property type="term" value="F:glucose-1-phosphate adenylyltransferase activity"/>
    <property type="evidence" value="ECO:0007669"/>
    <property type="project" value="UniProtKB-UniRule"/>
</dbReference>
<dbReference type="GO" id="GO:0005978">
    <property type="term" value="P:glycogen biosynthetic process"/>
    <property type="evidence" value="ECO:0007669"/>
    <property type="project" value="UniProtKB-UniRule"/>
</dbReference>
<dbReference type="CDD" id="cd02508">
    <property type="entry name" value="ADP_Glucose_PP"/>
    <property type="match status" value="1"/>
</dbReference>
<dbReference type="CDD" id="cd04651">
    <property type="entry name" value="LbH_G1P_AT_C"/>
    <property type="match status" value="1"/>
</dbReference>
<dbReference type="Gene3D" id="2.160.10.10">
    <property type="entry name" value="Hexapeptide repeat proteins"/>
    <property type="match status" value="1"/>
</dbReference>
<dbReference type="Gene3D" id="3.90.550.10">
    <property type="entry name" value="Spore Coat Polysaccharide Biosynthesis Protein SpsA, Chain A"/>
    <property type="match status" value="1"/>
</dbReference>
<dbReference type="HAMAP" id="MF_00624">
    <property type="entry name" value="GlgC"/>
    <property type="match status" value="1"/>
</dbReference>
<dbReference type="InterPro" id="IPR011831">
    <property type="entry name" value="ADP-Glc_PPase"/>
</dbReference>
<dbReference type="InterPro" id="IPR005836">
    <property type="entry name" value="ADP_Glu_pyroP_CS"/>
</dbReference>
<dbReference type="InterPro" id="IPR023049">
    <property type="entry name" value="GlgC_bac"/>
</dbReference>
<dbReference type="InterPro" id="IPR056818">
    <property type="entry name" value="GlmU/GlgC-like_hexapep"/>
</dbReference>
<dbReference type="InterPro" id="IPR005835">
    <property type="entry name" value="NTP_transferase_dom"/>
</dbReference>
<dbReference type="InterPro" id="IPR029044">
    <property type="entry name" value="Nucleotide-diphossugar_trans"/>
</dbReference>
<dbReference type="InterPro" id="IPR011004">
    <property type="entry name" value="Trimer_LpxA-like_sf"/>
</dbReference>
<dbReference type="NCBIfam" id="TIGR02091">
    <property type="entry name" value="glgC"/>
    <property type="match status" value="1"/>
</dbReference>
<dbReference type="NCBIfam" id="NF003670">
    <property type="entry name" value="PRK05293.1"/>
    <property type="match status" value="1"/>
</dbReference>
<dbReference type="PANTHER" id="PTHR43523:SF2">
    <property type="entry name" value="GLUCOSE-1-PHOSPHATE ADENYLYLTRANSFERASE"/>
    <property type="match status" value="1"/>
</dbReference>
<dbReference type="PANTHER" id="PTHR43523">
    <property type="entry name" value="GLUCOSE-1-PHOSPHATE ADENYLYLTRANSFERASE-RELATED"/>
    <property type="match status" value="1"/>
</dbReference>
<dbReference type="Pfam" id="PF24894">
    <property type="entry name" value="Hexapep_GlmU"/>
    <property type="match status" value="1"/>
</dbReference>
<dbReference type="Pfam" id="PF00483">
    <property type="entry name" value="NTP_transferase"/>
    <property type="match status" value="1"/>
</dbReference>
<dbReference type="SUPFAM" id="SSF53448">
    <property type="entry name" value="Nucleotide-diphospho-sugar transferases"/>
    <property type="match status" value="1"/>
</dbReference>
<dbReference type="SUPFAM" id="SSF51161">
    <property type="entry name" value="Trimeric LpxA-like enzymes"/>
    <property type="match status" value="1"/>
</dbReference>
<dbReference type="PROSITE" id="PS00808">
    <property type="entry name" value="ADP_GLC_PYROPHOSPH_1"/>
    <property type="match status" value="1"/>
</dbReference>
<dbReference type="PROSITE" id="PS00809">
    <property type="entry name" value="ADP_GLC_PYROPHOSPH_2"/>
    <property type="match status" value="1"/>
</dbReference>
<dbReference type="PROSITE" id="PS00810">
    <property type="entry name" value="ADP_GLC_PYROPHOSPH_3"/>
    <property type="match status" value="1"/>
</dbReference>
<proteinExistence type="inferred from homology"/>
<comment type="function">
    <text evidence="1">Involved in the biosynthesis of ADP-glucose, a building block required for the elongation reactions to produce glycogen. Catalyzes the reaction between ATP and alpha-D-glucose 1-phosphate (G1P) to produce pyrophosphate and ADP-Glc.</text>
</comment>
<comment type="catalytic activity">
    <reaction evidence="1">
        <text>alpha-D-glucose 1-phosphate + ATP + H(+) = ADP-alpha-D-glucose + diphosphate</text>
        <dbReference type="Rhea" id="RHEA:12120"/>
        <dbReference type="ChEBI" id="CHEBI:15378"/>
        <dbReference type="ChEBI" id="CHEBI:30616"/>
        <dbReference type="ChEBI" id="CHEBI:33019"/>
        <dbReference type="ChEBI" id="CHEBI:57498"/>
        <dbReference type="ChEBI" id="CHEBI:58601"/>
        <dbReference type="EC" id="2.7.7.27"/>
    </reaction>
</comment>
<comment type="pathway">
    <text evidence="1">Glycan biosynthesis; glycogen biosynthesis.</text>
</comment>
<comment type="subunit">
    <text evidence="1">Homotetramer.</text>
</comment>
<comment type="similarity">
    <text evidence="1">Belongs to the bacterial/plant glucose-1-phosphate adenylyltransferase family.</text>
</comment>
<evidence type="ECO:0000255" key="1">
    <source>
        <dbReference type="HAMAP-Rule" id="MF_00624"/>
    </source>
</evidence>
<organism>
    <name type="scientific">Streptococcus pneumoniae (strain ATCC 700669 / Spain 23F-1)</name>
    <dbReference type="NCBI Taxonomy" id="561276"/>
    <lineage>
        <taxon>Bacteria</taxon>
        <taxon>Bacillati</taxon>
        <taxon>Bacillota</taxon>
        <taxon>Bacilli</taxon>
        <taxon>Lactobacillales</taxon>
        <taxon>Streptococcaceae</taxon>
        <taxon>Streptococcus</taxon>
    </lineage>
</organism>
<sequence>MKNEMLALILAGGQGTRLGKLTQSIAKPAVQFGGRYRIIDFALSNCANSGIHNVGVVTQYQPLALNNHIGNGSSWGLDGINSGVSILQPYSASEGNRWFEGTSHAIYQNIDYIDSVNPEYVLILSGDHIYKMDYDDMLQSHKDNNASLTVAVLDVPLKEASRFGIMNTDANNRIVEFEEKPAQPKSTKASMGIYIFDWQRLRNMLVAAEKSKVGMSDFGKNVIPNYLESGESVYAYEFSGYWKDVGTIESLWEANMEYISPENALDSRNRQWKIYSRNLISPPNFLGANAHVEDSLVVDGCFVDGTVKHSILSTGAQVREGAEVLDSVIMSGAIIGQGAKIKRAIIGEGAIISDGVEIDGTDEVQVVGYNEVVGVATDED</sequence>
<reference key="1">
    <citation type="journal article" date="2009" name="J. Bacteriol.">
        <title>Role of conjugative elements in the evolution of the multidrug-resistant pandemic clone Streptococcus pneumoniae Spain23F ST81.</title>
        <authorList>
            <person name="Croucher N.J."/>
            <person name="Walker D."/>
            <person name="Romero P."/>
            <person name="Lennard N."/>
            <person name="Paterson G.K."/>
            <person name="Bason N.C."/>
            <person name="Mitchell A.M."/>
            <person name="Quail M.A."/>
            <person name="Andrew P.W."/>
            <person name="Parkhill J."/>
            <person name="Bentley S.D."/>
            <person name="Mitchell T.J."/>
        </authorList>
    </citation>
    <scope>NUCLEOTIDE SEQUENCE [LARGE SCALE GENOMIC DNA]</scope>
    <source>
        <strain>ATCC 700669 / Spain 23F-1</strain>
    </source>
</reference>
<protein>
    <recommendedName>
        <fullName evidence="1">Glucose-1-phosphate adenylyltransferase</fullName>
        <ecNumber evidence="1">2.7.7.27</ecNumber>
    </recommendedName>
    <alternativeName>
        <fullName evidence="1">ADP-glucose pyrophosphorylase</fullName>
        <shortName evidence="1">ADPGlc PPase</shortName>
    </alternativeName>
    <alternativeName>
        <fullName evidence="1">ADP-glucose synthase</fullName>
    </alternativeName>
</protein>
<feature type="chain" id="PRO_1000147236" description="Glucose-1-phosphate adenylyltransferase">
    <location>
        <begin position="1"/>
        <end position="380"/>
    </location>
</feature>
<feature type="binding site" evidence="1">
    <location>
        <position position="164"/>
    </location>
    <ligand>
        <name>alpha-D-glucose 1-phosphate</name>
        <dbReference type="ChEBI" id="CHEBI:58601"/>
    </ligand>
</feature>
<feature type="binding site" evidence="1">
    <location>
        <begin position="179"/>
        <end position="180"/>
    </location>
    <ligand>
        <name>alpha-D-glucose 1-phosphate</name>
        <dbReference type="ChEBI" id="CHEBI:58601"/>
    </ligand>
</feature>
<feature type="binding site" evidence="1">
    <location>
        <position position="190"/>
    </location>
    <ligand>
        <name>alpha-D-glucose 1-phosphate</name>
        <dbReference type="ChEBI" id="CHEBI:58601"/>
    </ligand>
</feature>